<accession>A7NA22</accession>
<protein>
    <recommendedName>
        <fullName evidence="1">4-hydroxy-3-methylbut-2-enyl diphosphate reductase</fullName>
        <shortName evidence="1">HMBPP reductase</shortName>
        <ecNumber evidence="1">1.17.7.4</ecNumber>
    </recommendedName>
</protein>
<name>ISPH_FRATF</name>
<proteinExistence type="inferred from homology"/>
<evidence type="ECO:0000255" key="1">
    <source>
        <dbReference type="HAMAP-Rule" id="MF_00191"/>
    </source>
</evidence>
<sequence>MKILLANPRGFCAGVSRAVETVEKVLEVEKSPVYVRHEVVHNKVVVDSLKKKGVVFVKEVDEVPDDAVCIFSAHGVSLKVEEAAAKKNLVLYDATCPLVTKVHRGVRLASNNDAECILIGHKGHPEVQGTMGQYRSKKGAIYLIESEEDLNKLTIKDPDNLYYATQTTLSVDETHGIIQALKDKYPNIKGPKKEDICYATQNRQTAIKAMLKHIDVLVVVGSQNSSNSNRLKELATLEGIDAYLVDNPKDVDKLWFDNKKVCGVSAGASAPEYLVQQIISQISKVCSTEVEEFEGIKEEVYFPLPRLLKQKIGTGKVE</sequence>
<keyword id="KW-0004">4Fe-4S</keyword>
<keyword id="KW-0408">Iron</keyword>
<keyword id="KW-0411">Iron-sulfur</keyword>
<keyword id="KW-0414">Isoprene biosynthesis</keyword>
<keyword id="KW-0479">Metal-binding</keyword>
<keyword id="KW-0560">Oxidoreductase</keyword>
<gene>
    <name evidence="1" type="primary">ispH</name>
    <name type="ordered locus">FTA_0348</name>
</gene>
<feature type="chain" id="PRO_1000021121" description="4-hydroxy-3-methylbut-2-enyl diphosphate reductase">
    <location>
        <begin position="1"/>
        <end position="318"/>
    </location>
</feature>
<feature type="active site" description="Proton donor" evidence="1">
    <location>
        <position position="126"/>
    </location>
</feature>
<feature type="binding site" evidence="1">
    <location>
        <position position="12"/>
    </location>
    <ligand>
        <name>[4Fe-4S] cluster</name>
        <dbReference type="ChEBI" id="CHEBI:49883"/>
    </ligand>
</feature>
<feature type="binding site" evidence="1">
    <location>
        <position position="41"/>
    </location>
    <ligand>
        <name>(2E)-4-hydroxy-3-methylbut-2-enyl diphosphate</name>
        <dbReference type="ChEBI" id="CHEBI:128753"/>
    </ligand>
</feature>
<feature type="binding site" evidence="1">
    <location>
        <position position="41"/>
    </location>
    <ligand>
        <name>dimethylallyl diphosphate</name>
        <dbReference type="ChEBI" id="CHEBI:57623"/>
    </ligand>
</feature>
<feature type="binding site" evidence="1">
    <location>
        <position position="41"/>
    </location>
    <ligand>
        <name>isopentenyl diphosphate</name>
        <dbReference type="ChEBI" id="CHEBI:128769"/>
    </ligand>
</feature>
<feature type="binding site" evidence="1">
    <location>
        <position position="74"/>
    </location>
    <ligand>
        <name>(2E)-4-hydroxy-3-methylbut-2-enyl diphosphate</name>
        <dbReference type="ChEBI" id="CHEBI:128753"/>
    </ligand>
</feature>
<feature type="binding site" evidence="1">
    <location>
        <position position="74"/>
    </location>
    <ligand>
        <name>dimethylallyl diphosphate</name>
        <dbReference type="ChEBI" id="CHEBI:57623"/>
    </ligand>
</feature>
<feature type="binding site" evidence="1">
    <location>
        <position position="74"/>
    </location>
    <ligand>
        <name>isopentenyl diphosphate</name>
        <dbReference type="ChEBI" id="CHEBI:128769"/>
    </ligand>
</feature>
<feature type="binding site" evidence="1">
    <location>
        <position position="96"/>
    </location>
    <ligand>
        <name>[4Fe-4S] cluster</name>
        <dbReference type="ChEBI" id="CHEBI:49883"/>
    </ligand>
</feature>
<feature type="binding site" evidence="1">
    <location>
        <position position="124"/>
    </location>
    <ligand>
        <name>(2E)-4-hydroxy-3-methylbut-2-enyl diphosphate</name>
        <dbReference type="ChEBI" id="CHEBI:128753"/>
    </ligand>
</feature>
<feature type="binding site" evidence="1">
    <location>
        <position position="124"/>
    </location>
    <ligand>
        <name>dimethylallyl diphosphate</name>
        <dbReference type="ChEBI" id="CHEBI:57623"/>
    </ligand>
</feature>
<feature type="binding site" evidence="1">
    <location>
        <position position="124"/>
    </location>
    <ligand>
        <name>isopentenyl diphosphate</name>
        <dbReference type="ChEBI" id="CHEBI:128769"/>
    </ligand>
</feature>
<feature type="binding site" evidence="1">
    <location>
        <position position="167"/>
    </location>
    <ligand>
        <name>(2E)-4-hydroxy-3-methylbut-2-enyl diphosphate</name>
        <dbReference type="ChEBI" id="CHEBI:128753"/>
    </ligand>
</feature>
<feature type="binding site" evidence="1">
    <location>
        <position position="197"/>
    </location>
    <ligand>
        <name>[4Fe-4S] cluster</name>
        <dbReference type="ChEBI" id="CHEBI:49883"/>
    </ligand>
</feature>
<feature type="binding site" evidence="1">
    <location>
        <position position="225"/>
    </location>
    <ligand>
        <name>(2E)-4-hydroxy-3-methylbut-2-enyl diphosphate</name>
        <dbReference type="ChEBI" id="CHEBI:128753"/>
    </ligand>
</feature>
<feature type="binding site" evidence="1">
    <location>
        <position position="225"/>
    </location>
    <ligand>
        <name>dimethylallyl diphosphate</name>
        <dbReference type="ChEBI" id="CHEBI:57623"/>
    </ligand>
</feature>
<feature type="binding site" evidence="1">
    <location>
        <position position="225"/>
    </location>
    <ligand>
        <name>isopentenyl diphosphate</name>
        <dbReference type="ChEBI" id="CHEBI:128769"/>
    </ligand>
</feature>
<feature type="binding site" evidence="1">
    <location>
        <position position="226"/>
    </location>
    <ligand>
        <name>(2E)-4-hydroxy-3-methylbut-2-enyl diphosphate</name>
        <dbReference type="ChEBI" id="CHEBI:128753"/>
    </ligand>
</feature>
<feature type="binding site" evidence="1">
    <location>
        <position position="226"/>
    </location>
    <ligand>
        <name>dimethylallyl diphosphate</name>
        <dbReference type="ChEBI" id="CHEBI:57623"/>
    </ligand>
</feature>
<feature type="binding site" evidence="1">
    <location>
        <position position="226"/>
    </location>
    <ligand>
        <name>isopentenyl diphosphate</name>
        <dbReference type="ChEBI" id="CHEBI:128769"/>
    </ligand>
</feature>
<feature type="binding site" evidence="1">
    <location>
        <position position="227"/>
    </location>
    <ligand>
        <name>(2E)-4-hydroxy-3-methylbut-2-enyl diphosphate</name>
        <dbReference type="ChEBI" id="CHEBI:128753"/>
    </ligand>
</feature>
<feature type="binding site" evidence="1">
    <location>
        <position position="227"/>
    </location>
    <ligand>
        <name>dimethylallyl diphosphate</name>
        <dbReference type="ChEBI" id="CHEBI:57623"/>
    </ligand>
</feature>
<feature type="binding site" evidence="1">
    <location>
        <position position="227"/>
    </location>
    <ligand>
        <name>isopentenyl diphosphate</name>
        <dbReference type="ChEBI" id="CHEBI:128769"/>
    </ligand>
</feature>
<feature type="binding site" evidence="1">
    <location>
        <position position="269"/>
    </location>
    <ligand>
        <name>(2E)-4-hydroxy-3-methylbut-2-enyl diphosphate</name>
        <dbReference type="ChEBI" id="CHEBI:128753"/>
    </ligand>
</feature>
<feature type="binding site" evidence="1">
    <location>
        <position position="269"/>
    </location>
    <ligand>
        <name>dimethylallyl diphosphate</name>
        <dbReference type="ChEBI" id="CHEBI:57623"/>
    </ligand>
</feature>
<feature type="binding site" evidence="1">
    <location>
        <position position="269"/>
    </location>
    <ligand>
        <name>isopentenyl diphosphate</name>
        <dbReference type="ChEBI" id="CHEBI:128769"/>
    </ligand>
</feature>
<dbReference type="EC" id="1.17.7.4" evidence="1"/>
<dbReference type="EMBL" id="CP000803">
    <property type="protein sequence ID" value="ABU60825.1"/>
    <property type="molecule type" value="Genomic_DNA"/>
</dbReference>
<dbReference type="RefSeq" id="WP_003018366.1">
    <property type="nucleotide sequence ID" value="NC_009749.1"/>
</dbReference>
<dbReference type="SMR" id="A7NA22"/>
<dbReference type="KEGG" id="fta:FTA_0348"/>
<dbReference type="HOGENOM" id="CLU_027486_1_0_6"/>
<dbReference type="UniPathway" id="UPA00056">
    <property type="reaction ID" value="UER00097"/>
</dbReference>
<dbReference type="UniPathway" id="UPA00059">
    <property type="reaction ID" value="UER00105"/>
</dbReference>
<dbReference type="GO" id="GO:0051539">
    <property type="term" value="F:4 iron, 4 sulfur cluster binding"/>
    <property type="evidence" value="ECO:0007669"/>
    <property type="project" value="UniProtKB-UniRule"/>
</dbReference>
<dbReference type="GO" id="GO:0051745">
    <property type="term" value="F:4-hydroxy-3-methylbut-2-enyl diphosphate reductase activity"/>
    <property type="evidence" value="ECO:0007669"/>
    <property type="project" value="UniProtKB-UniRule"/>
</dbReference>
<dbReference type="GO" id="GO:0046872">
    <property type="term" value="F:metal ion binding"/>
    <property type="evidence" value="ECO:0007669"/>
    <property type="project" value="UniProtKB-KW"/>
</dbReference>
<dbReference type="GO" id="GO:0050992">
    <property type="term" value="P:dimethylallyl diphosphate biosynthetic process"/>
    <property type="evidence" value="ECO:0007669"/>
    <property type="project" value="UniProtKB-UniRule"/>
</dbReference>
<dbReference type="GO" id="GO:0019288">
    <property type="term" value="P:isopentenyl diphosphate biosynthetic process, methylerythritol 4-phosphate pathway"/>
    <property type="evidence" value="ECO:0007669"/>
    <property type="project" value="UniProtKB-UniRule"/>
</dbReference>
<dbReference type="GO" id="GO:0016114">
    <property type="term" value="P:terpenoid biosynthetic process"/>
    <property type="evidence" value="ECO:0007669"/>
    <property type="project" value="UniProtKB-UniRule"/>
</dbReference>
<dbReference type="CDD" id="cd13944">
    <property type="entry name" value="lytB_ispH"/>
    <property type="match status" value="1"/>
</dbReference>
<dbReference type="Gene3D" id="3.40.50.11270">
    <property type="match status" value="1"/>
</dbReference>
<dbReference type="Gene3D" id="3.40.1010.20">
    <property type="entry name" value="4-hydroxy-3-methylbut-2-enyl diphosphate reductase, catalytic domain"/>
    <property type="match status" value="2"/>
</dbReference>
<dbReference type="HAMAP" id="MF_00191">
    <property type="entry name" value="IspH"/>
    <property type="match status" value="1"/>
</dbReference>
<dbReference type="InterPro" id="IPR003451">
    <property type="entry name" value="LytB/IspH"/>
</dbReference>
<dbReference type="NCBIfam" id="TIGR00216">
    <property type="entry name" value="ispH_lytB"/>
    <property type="match status" value="1"/>
</dbReference>
<dbReference type="NCBIfam" id="NF002188">
    <property type="entry name" value="PRK01045.1-2"/>
    <property type="match status" value="1"/>
</dbReference>
<dbReference type="NCBIfam" id="NF002190">
    <property type="entry name" value="PRK01045.1-4"/>
    <property type="match status" value="1"/>
</dbReference>
<dbReference type="PANTHER" id="PTHR30426">
    <property type="entry name" value="4-HYDROXY-3-METHYLBUT-2-ENYL DIPHOSPHATE REDUCTASE"/>
    <property type="match status" value="1"/>
</dbReference>
<dbReference type="PANTHER" id="PTHR30426:SF0">
    <property type="entry name" value="4-HYDROXY-3-METHYLBUT-2-ENYL DIPHOSPHATE REDUCTASE"/>
    <property type="match status" value="1"/>
</dbReference>
<dbReference type="Pfam" id="PF02401">
    <property type="entry name" value="LYTB"/>
    <property type="match status" value="1"/>
</dbReference>
<reference key="1">
    <citation type="journal article" date="2009" name="PLoS ONE">
        <title>Complete genome sequence of Francisella tularensis subspecies holarctica FTNF002-00.</title>
        <authorList>
            <person name="Barabote R.D."/>
            <person name="Xie G."/>
            <person name="Brettin T.S."/>
            <person name="Hinrichs S.H."/>
            <person name="Fey P.D."/>
            <person name="Jay J.J."/>
            <person name="Engle J.L."/>
            <person name="Godbole S.D."/>
            <person name="Noronha J.M."/>
            <person name="Scheuermann R.H."/>
            <person name="Zhou L.W."/>
            <person name="Lion C."/>
            <person name="Dempsey M.P."/>
        </authorList>
    </citation>
    <scope>NUCLEOTIDE SEQUENCE [LARGE SCALE GENOMIC DNA]</scope>
    <source>
        <strain>FTNF002-00 / FTA</strain>
    </source>
</reference>
<comment type="function">
    <text evidence="1">Catalyzes the conversion of 1-hydroxy-2-methyl-2-(E)-butenyl 4-diphosphate (HMBPP) into a mixture of isopentenyl diphosphate (IPP) and dimethylallyl diphosphate (DMAPP). Acts in the terminal step of the DOXP/MEP pathway for isoprenoid precursor biosynthesis.</text>
</comment>
<comment type="catalytic activity">
    <reaction evidence="1">
        <text>isopentenyl diphosphate + 2 oxidized [2Fe-2S]-[ferredoxin] + H2O = (2E)-4-hydroxy-3-methylbut-2-enyl diphosphate + 2 reduced [2Fe-2S]-[ferredoxin] + 2 H(+)</text>
        <dbReference type="Rhea" id="RHEA:24488"/>
        <dbReference type="Rhea" id="RHEA-COMP:10000"/>
        <dbReference type="Rhea" id="RHEA-COMP:10001"/>
        <dbReference type="ChEBI" id="CHEBI:15377"/>
        <dbReference type="ChEBI" id="CHEBI:15378"/>
        <dbReference type="ChEBI" id="CHEBI:33737"/>
        <dbReference type="ChEBI" id="CHEBI:33738"/>
        <dbReference type="ChEBI" id="CHEBI:128753"/>
        <dbReference type="ChEBI" id="CHEBI:128769"/>
        <dbReference type="EC" id="1.17.7.4"/>
    </reaction>
</comment>
<comment type="catalytic activity">
    <reaction evidence="1">
        <text>dimethylallyl diphosphate + 2 oxidized [2Fe-2S]-[ferredoxin] + H2O = (2E)-4-hydroxy-3-methylbut-2-enyl diphosphate + 2 reduced [2Fe-2S]-[ferredoxin] + 2 H(+)</text>
        <dbReference type="Rhea" id="RHEA:24825"/>
        <dbReference type="Rhea" id="RHEA-COMP:10000"/>
        <dbReference type="Rhea" id="RHEA-COMP:10001"/>
        <dbReference type="ChEBI" id="CHEBI:15377"/>
        <dbReference type="ChEBI" id="CHEBI:15378"/>
        <dbReference type="ChEBI" id="CHEBI:33737"/>
        <dbReference type="ChEBI" id="CHEBI:33738"/>
        <dbReference type="ChEBI" id="CHEBI:57623"/>
        <dbReference type="ChEBI" id="CHEBI:128753"/>
        <dbReference type="EC" id="1.17.7.4"/>
    </reaction>
</comment>
<comment type="cofactor">
    <cofactor evidence="1">
        <name>[4Fe-4S] cluster</name>
        <dbReference type="ChEBI" id="CHEBI:49883"/>
    </cofactor>
    <text evidence="1">Binds 1 [4Fe-4S] cluster per subunit.</text>
</comment>
<comment type="pathway">
    <text evidence="1">Isoprenoid biosynthesis; dimethylallyl diphosphate biosynthesis; dimethylallyl diphosphate from (2E)-4-hydroxy-3-methylbutenyl diphosphate: step 1/1.</text>
</comment>
<comment type="pathway">
    <text evidence="1">Isoprenoid biosynthesis; isopentenyl diphosphate biosynthesis via DXP pathway; isopentenyl diphosphate from 1-deoxy-D-xylulose 5-phosphate: step 6/6.</text>
</comment>
<comment type="similarity">
    <text evidence="1">Belongs to the IspH family.</text>
</comment>
<organism>
    <name type="scientific">Francisella tularensis subsp. holarctica (strain FTNF002-00 / FTA)</name>
    <dbReference type="NCBI Taxonomy" id="458234"/>
    <lineage>
        <taxon>Bacteria</taxon>
        <taxon>Pseudomonadati</taxon>
        <taxon>Pseudomonadota</taxon>
        <taxon>Gammaproteobacteria</taxon>
        <taxon>Thiotrichales</taxon>
        <taxon>Francisellaceae</taxon>
        <taxon>Francisella</taxon>
    </lineage>
</organism>